<accession>Q65TI7</accession>
<evidence type="ECO:0000255" key="1">
    <source>
        <dbReference type="HAMAP-Rule" id="MF_01336"/>
    </source>
</evidence>
<evidence type="ECO:0000305" key="2"/>
<proteinExistence type="inferred from homology"/>
<gene>
    <name evidence="1" type="primary">rplY</name>
    <name type="ordered locus">MS1116</name>
</gene>
<protein>
    <recommendedName>
        <fullName evidence="1">Large ribosomal subunit protein bL25</fullName>
    </recommendedName>
    <alternativeName>
        <fullName evidence="2">50S ribosomal protein L25</fullName>
    </alternativeName>
</protein>
<organism>
    <name type="scientific">Mannheimia succiniciproducens (strain KCTC 0769BP / MBEL55E)</name>
    <dbReference type="NCBI Taxonomy" id="221988"/>
    <lineage>
        <taxon>Bacteria</taxon>
        <taxon>Pseudomonadati</taxon>
        <taxon>Pseudomonadota</taxon>
        <taxon>Gammaproteobacteria</taxon>
        <taxon>Pasteurellales</taxon>
        <taxon>Pasteurellaceae</taxon>
        <taxon>Basfia</taxon>
    </lineage>
</organism>
<reference key="1">
    <citation type="journal article" date="2004" name="Nat. Biotechnol.">
        <title>The genome sequence of the capnophilic rumen bacterium Mannheimia succiniciproducens.</title>
        <authorList>
            <person name="Hong S.H."/>
            <person name="Kim J.S."/>
            <person name="Lee S.Y."/>
            <person name="In Y.H."/>
            <person name="Choi S.S."/>
            <person name="Rih J.-K."/>
            <person name="Kim C.H."/>
            <person name="Jeong H."/>
            <person name="Hur C.G."/>
            <person name="Kim J.J."/>
        </authorList>
    </citation>
    <scope>NUCLEOTIDE SEQUENCE [LARGE SCALE GENOMIC DNA]</scope>
    <source>
        <strain>KCTC 0769BP / MBEL55E</strain>
    </source>
</reference>
<name>RL25_MANSM</name>
<sequence length="95" mass="10596">MAFKFNAEVRSAQGKGASRRLRHNGQIPAIVYGGNEDAVSIVLNHDELNNAQAHDSFYSEVITLVINGKEVAVKVQAMQRHPFKPKLVHIDFKRA</sequence>
<dbReference type="EMBL" id="AE016827">
    <property type="protein sequence ID" value="AAU37723.1"/>
    <property type="molecule type" value="Genomic_DNA"/>
</dbReference>
<dbReference type="RefSeq" id="WP_011200291.1">
    <property type="nucleotide sequence ID" value="NC_006300.1"/>
</dbReference>
<dbReference type="SMR" id="Q65TI7"/>
<dbReference type="STRING" id="221988.MS1116"/>
<dbReference type="KEGG" id="msu:MS1116"/>
<dbReference type="eggNOG" id="COG1825">
    <property type="taxonomic scope" value="Bacteria"/>
</dbReference>
<dbReference type="HOGENOM" id="CLU_137946_0_0_6"/>
<dbReference type="OrthoDB" id="9806411at2"/>
<dbReference type="Proteomes" id="UP000000607">
    <property type="component" value="Chromosome"/>
</dbReference>
<dbReference type="GO" id="GO:0022625">
    <property type="term" value="C:cytosolic large ribosomal subunit"/>
    <property type="evidence" value="ECO:0007669"/>
    <property type="project" value="TreeGrafter"/>
</dbReference>
<dbReference type="GO" id="GO:0008097">
    <property type="term" value="F:5S rRNA binding"/>
    <property type="evidence" value="ECO:0007669"/>
    <property type="project" value="InterPro"/>
</dbReference>
<dbReference type="GO" id="GO:0003735">
    <property type="term" value="F:structural constituent of ribosome"/>
    <property type="evidence" value="ECO:0007669"/>
    <property type="project" value="InterPro"/>
</dbReference>
<dbReference type="GO" id="GO:0006412">
    <property type="term" value="P:translation"/>
    <property type="evidence" value="ECO:0007669"/>
    <property type="project" value="UniProtKB-UniRule"/>
</dbReference>
<dbReference type="CDD" id="cd00495">
    <property type="entry name" value="Ribosomal_L25_TL5_CTC"/>
    <property type="match status" value="1"/>
</dbReference>
<dbReference type="FunFam" id="2.40.240.10:FF:000002">
    <property type="entry name" value="50S ribosomal protein L25"/>
    <property type="match status" value="1"/>
</dbReference>
<dbReference type="Gene3D" id="2.40.240.10">
    <property type="entry name" value="Ribosomal Protein L25, Chain P"/>
    <property type="match status" value="1"/>
</dbReference>
<dbReference type="HAMAP" id="MF_01336">
    <property type="entry name" value="Ribosomal_bL25"/>
    <property type="match status" value="1"/>
</dbReference>
<dbReference type="InterPro" id="IPR020056">
    <property type="entry name" value="Rbsml_bL25/Gln-tRNA_synth_N"/>
</dbReference>
<dbReference type="InterPro" id="IPR011035">
    <property type="entry name" value="Ribosomal_bL25/Gln-tRNA_synth"/>
</dbReference>
<dbReference type="InterPro" id="IPR020055">
    <property type="entry name" value="Ribosomal_bL25_short"/>
</dbReference>
<dbReference type="InterPro" id="IPR029751">
    <property type="entry name" value="Ribosomal_L25_dom"/>
</dbReference>
<dbReference type="InterPro" id="IPR020930">
    <property type="entry name" value="Ribosomal_uL5_bac-type"/>
</dbReference>
<dbReference type="NCBIfam" id="NF004612">
    <property type="entry name" value="PRK05943.1"/>
    <property type="match status" value="1"/>
</dbReference>
<dbReference type="PANTHER" id="PTHR33284">
    <property type="entry name" value="RIBOSOMAL PROTEIN L25/GLN-TRNA SYNTHETASE, ANTI-CODON-BINDING DOMAIN-CONTAINING PROTEIN"/>
    <property type="match status" value="1"/>
</dbReference>
<dbReference type="PANTHER" id="PTHR33284:SF1">
    <property type="entry name" value="RIBOSOMAL PROTEIN L25_GLN-TRNA SYNTHETASE, ANTI-CODON-BINDING DOMAIN-CONTAINING PROTEIN"/>
    <property type="match status" value="1"/>
</dbReference>
<dbReference type="Pfam" id="PF01386">
    <property type="entry name" value="Ribosomal_L25p"/>
    <property type="match status" value="1"/>
</dbReference>
<dbReference type="SUPFAM" id="SSF50715">
    <property type="entry name" value="Ribosomal protein L25-like"/>
    <property type="match status" value="1"/>
</dbReference>
<keyword id="KW-0687">Ribonucleoprotein</keyword>
<keyword id="KW-0689">Ribosomal protein</keyword>
<keyword id="KW-0694">RNA-binding</keyword>
<keyword id="KW-0699">rRNA-binding</keyword>
<comment type="function">
    <text evidence="1">This is one of the proteins that binds to the 5S RNA in the ribosome where it forms part of the central protuberance.</text>
</comment>
<comment type="subunit">
    <text evidence="1">Part of the 50S ribosomal subunit; part of the 5S rRNA/L5/L18/L25 subcomplex. Contacts the 5S rRNA. Binds to the 5S rRNA independently of L5 and L18.</text>
</comment>
<comment type="similarity">
    <text evidence="1">Belongs to the bacterial ribosomal protein bL25 family.</text>
</comment>
<feature type="chain" id="PRO_0000181485" description="Large ribosomal subunit protein bL25">
    <location>
        <begin position="1"/>
        <end position="95"/>
    </location>
</feature>